<protein>
    <recommendedName>
        <fullName>Cation-transporting P-type ATPase B</fullName>
        <ecNumber>7.2.2.-</ecNumber>
    </recommendedName>
</protein>
<organism>
    <name type="scientific">Mycobacterium tuberculosis (strain CDC 1551 / Oshkosh)</name>
    <dbReference type="NCBI Taxonomy" id="83331"/>
    <lineage>
        <taxon>Bacteria</taxon>
        <taxon>Bacillati</taxon>
        <taxon>Actinomycetota</taxon>
        <taxon>Actinomycetes</taxon>
        <taxon>Mycobacteriales</taxon>
        <taxon>Mycobacteriaceae</taxon>
        <taxon>Mycobacterium</taxon>
        <taxon>Mycobacterium tuberculosis complex</taxon>
    </lineage>
</organism>
<gene>
    <name type="primary">ctpB</name>
    <name type="ordered locus">MT0112</name>
</gene>
<dbReference type="EC" id="7.2.2.-"/>
<dbReference type="EMBL" id="AE000516">
    <property type="protein sequence ID" value="AAK44334.1"/>
    <property type="molecule type" value="Genomic_DNA"/>
</dbReference>
<dbReference type="PIR" id="G70751">
    <property type="entry name" value="G70751"/>
</dbReference>
<dbReference type="RefSeq" id="WP_003400797.1">
    <property type="nucleotide sequence ID" value="NZ_KK341227.1"/>
</dbReference>
<dbReference type="SMR" id="P9WPT8"/>
<dbReference type="KEGG" id="mtc:MT0112"/>
<dbReference type="PATRIC" id="fig|83331.31.peg.117"/>
<dbReference type="HOGENOM" id="CLU_001771_0_3_11"/>
<dbReference type="Proteomes" id="UP000001020">
    <property type="component" value="Chromosome"/>
</dbReference>
<dbReference type="GO" id="GO:0005886">
    <property type="term" value="C:plasma membrane"/>
    <property type="evidence" value="ECO:0007669"/>
    <property type="project" value="UniProtKB-SubCell"/>
</dbReference>
<dbReference type="GO" id="GO:0005524">
    <property type="term" value="F:ATP binding"/>
    <property type="evidence" value="ECO:0007669"/>
    <property type="project" value="UniProtKB-KW"/>
</dbReference>
<dbReference type="GO" id="GO:0016887">
    <property type="term" value="F:ATP hydrolysis activity"/>
    <property type="evidence" value="ECO:0007669"/>
    <property type="project" value="InterPro"/>
</dbReference>
<dbReference type="GO" id="GO:0005507">
    <property type="term" value="F:copper ion binding"/>
    <property type="evidence" value="ECO:0007669"/>
    <property type="project" value="TreeGrafter"/>
</dbReference>
<dbReference type="GO" id="GO:0043682">
    <property type="term" value="F:P-type divalent copper transporter activity"/>
    <property type="evidence" value="ECO:0007669"/>
    <property type="project" value="TreeGrafter"/>
</dbReference>
<dbReference type="GO" id="GO:0055070">
    <property type="term" value="P:copper ion homeostasis"/>
    <property type="evidence" value="ECO:0007669"/>
    <property type="project" value="TreeGrafter"/>
</dbReference>
<dbReference type="CDD" id="cd00371">
    <property type="entry name" value="HMA"/>
    <property type="match status" value="1"/>
</dbReference>
<dbReference type="FunFam" id="3.30.70.100:FF:000005">
    <property type="entry name" value="Copper-exporting P-type ATPase A"/>
    <property type="match status" value="1"/>
</dbReference>
<dbReference type="FunFam" id="2.70.150.10:FF:000002">
    <property type="entry name" value="Copper-transporting ATPase 1, putative"/>
    <property type="match status" value="1"/>
</dbReference>
<dbReference type="Gene3D" id="3.30.70.100">
    <property type="match status" value="1"/>
</dbReference>
<dbReference type="Gene3D" id="3.40.1110.10">
    <property type="entry name" value="Calcium-transporting ATPase, cytoplasmic domain N"/>
    <property type="match status" value="1"/>
</dbReference>
<dbReference type="Gene3D" id="2.70.150.10">
    <property type="entry name" value="Calcium-transporting ATPase, cytoplasmic transduction domain A"/>
    <property type="match status" value="1"/>
</dbReference>
<dbReference type="Gene3D" id="3.40.50.1000">
    <property type="entry name" value="HAD superfamily/HAD-like"/>
    <property type="match status" value="1"/>
</dbReference>
<dbReference type="InterPro" id="IPR023299">
    <property type="entry name" value="ATPase_P-typ_cyto_dom_N"/>
</dbReference>
<dbReference type="InterPro" id="IPR018303">
    <property type="entry name" value="ATPase_P-typ_P_site"/>
</dbReference>
<dbReference type="InterPro" id="IPR023298">
    <property type="entry name" value="ATPase_P-typ_TM_dom_sf"/>
</dbReference>
<dbReference type="InterPro" id="IPR008250">
    <property type="entry name" value="ATPase_P-typ_transduc_dom_A_sf"/>
</dbReference>
<dbReference type="InterPro" id="IPR000579">
    <property type="entry name" value="Cation-trans_P-type_ATPase_A/B"/>
</dbReference>
<dbReference type="InterPro" id="IPR036412">
    <property type="entry name" value="HAD-like_sf"/>
</dbReference>
<dbReference type="InterPro" id="IPR023214">
    <property type="entry name" value="HAD_sf"/>
</dbReference>
<dbReference type="InterPro" id="IPR017969">
    <property type="entry name" value="Heavy-metal-associated_CS"/>
</dbReference>
<dbReference type="InterPro" id="IPR006121">
    <property type="entry name" value="HMA_dom"/>
</dbReference>
<dbReference type="InterPro" id="IPR036163">
    <property type="entry name" value="HMA_dom_sf"/>
</dbReference>
<dbReference type="InterPro" id="IPR027256">
    <property type="entry name" value="P-typ_ATPase_IB"/>
</dbReference>
<dbReference type="InterPro" id="IPR001757">
    <property type="entry name" value="P_typ_ATPase"/>
</dbReference>
<dbReference type="InterPro" id="IPR044492">
    <property type="entry name" value="P_typ_ATPase_HD_dom"/>
</dbReference>
<dbReference type="NCBIfam" id="TIGR01511">
    <property type="entry name" value="ATPase-IB1_Cu"/>
    <property type="match status" value="1"/>
</dbReference>
<dbReference type="NCBIfam" id="TIGR01525">
    <property type="entry name" value="ATPase-IB_hvy"/>
    <property type="match status" value="1"/>
</dbReference>
<dbReference type="NCBIfam" id="TIGR01494">
    <property type="entry name" value="ATPase_P-type"/>
    <property type="match status" value="2"/>
</dbReference>
<dbReference type="PANTHER" id="PTHR43520">
    <property type="entry name" value="ATP7, ISOFORM B"/>
    <property type="match status" value="1"/>
</dbReference>
<dbReference type="PANTHER" id="PTHR43520:SF8">
    <property type="entry name" value="P-TYPE CU(+) TRANSPORTER"/>
    <property type="match status" value="1"/>
</dbReference>
<dbReference type="Pfam" id="PF00122">
    <property type="entry name" value="E1-E2_ATPase"/>
    <property type="match status" value="1"/>
</dbReference>
<dbReference type="Pfam" id="PF00403">
    <property type="entry name" value="HMA"/>
    <property type="match status" value="1"/>
</dbReference>
<dbReference type="Pfam" id="PF00702">
    <property type="entry name" value="Hydrolase"/>
    <property type="match status" value="1"/>
</dbReference>
<dbReference type="PRINTS" id="PR00119">
    <property type="entry name" value="CATATPASE"/>
</dbReference>
<dbReference type="PRINTS" id="PR00940">
    <property type="entry name" value="CATPATPASEA"/>
</dbReference>
<dbReference type="SFLD" id="SFLDS00003">
    <property type="entry name" value="Haloacid_Dehalogenase"/>
    <property type="match status" value="1"/>
</dbReference>
<dbReference type="SFLD" id="SFLDF00027">
    <property type="entry name" value="p-type_atpase"/>
    <property type="match status" value="1"/>
</dbReference>
<dbReference type="SUPFAM" id="SSF81653">
    <property type="entry name" value="Calcium ATPase, transduction domain A"/>
    <property type="match status" value="1"/>
</dbReference>
<dbReference type="SUPFAM" id="SSF81665">
    <property type="entry name" value="Calcium ATPase, transmembrane domain M"/>
    <property type="match status" value="1"/>
</dbReference>
<dbReference type="SUPFAM" id="SSF56784">
    <property type="entry name" value="HAD-like"/>
    <property type="match status" value="1"/>
</dbReference>
<dbReference type="SUPFAM" id="SSF55008">
    <property type="entry name" value="HMA, heavy metal-associated domain"/>
    <property type="match status" value="1"/>
</dbReference>
<dbReference type="PROSITE" id="PS00154">
    <property type="entry name" value="ATPASE_E1_E2"/>
    <property type="match status" value="1"/>
</dbReference>
<dbReference type="PROSITE" id="PS01047">
    <property type="entry name" value="HMA_1"/>
    <property type="match status" value="1"/>
</dbReference>
<dbReference type="PROSITE" id="PS50846">
    <property type="entry name" value="HMA_2"/>
    <property type="match status" value="1"/>
</dbReference>
<feature type="chain" id="PRO_0000426889" description="Cation-transporting P-type ATPase B">
    <location>
        <begin position="1"/>
        <end position="752"/>
    </location>
</feature>
<feature type="transmembrane region" description="Helical" evidence="2">
    <location>
        <begin position="105"/>
        <end position="125"/>
    </location>
</feature>
<feature type="transmembrane region" description="Helical" evidence="2">
    <location>
        <begin position="132"/>
        <end position="152"/>
    </location>
</feature>
<feature type="transmembrane region" description="Helical" evidence="2">
    <location>
        <begin position="167"/>
        <end position="187"/>
    </location>
</feature>
<feature type="transmembrane region" description="Helical" evidence="2">
    <location>
        <begin position="201"/>
        <end position="221"/>
    </location>
</feature>
<feature type="transmembrane region" description="Helical" evidence="2">
    <location>
        <begin position="361"/>
        <end position="381"/>
    </location>
</feature>
<feature type="transmembrane region" description="Helical" evidence="2">
    <location>
        <begin position="390"/>
        <end position="410"/>
    </location>
</feature>
<feature type="transmembrane region" description="Helical" evidence="2">
    <location>
        <begin position="491"/>
        <end position="511"/>
    </location>
</feature>
<feature type="transmembrane region" description="Helical" evidence="2">
    <location>
        <begin position="714"/>
        <end position="734"/>
    </location>
</feature>
<feature type="domain" description="HMA" evidence="3">
    <location>
        <begin position="15"/>
        <end position="78"/>
    </location>
</feature>
<feature type="active site" description="4-aspartylphosphate intermediate" evidence="1">
    <location>
        <position position="446"/>
    </location>
</feature>
<feature type="binding site" evidence="3">
    <location>
        <position position="26"/>
    </location>
    <ligand>
        <name>a metal cation</name>
        <dbReference type="ChEBI" id="CHEBI:25213"/>
    </ligand>
</feature>
<feature type="binding site" evidence="3">
    <location>
        <position position="29"/>
    </location>
    <ligand>
        <name>a metal cation</name>
        <dbReference type="ChEBI" id="CHEBI:25213"/>
    </ligand>
</feature>
<keyword id="KW-0067">ATP-binding</keyword>
<keyword id="KW-1003">Cell membrane</keyword>
<keyword id="KW-0460">Magnesium</keyword>
<keyword id="KW-0472">Membrane</keyword>
<keyword id="KW-0479">Metal-binding</keyword>
<keyword id="KW-0547">Nucleotide-binding</keyword>
<keyword id="KW-0597">Phosphoprotein</keyword>
<keyword id="KW-1185">Reference proteome</keyword>
<keyword id="KW-1278">Translocase</keyword>
<keyword id="KW-0812">Transmembrane</keyword>
<keyword id="KW-1133">Transmembrane helix</keyword>
<name>CTPB_MYCTO</name>
<accession>P9WPT8</accession>
<accession>L0T4B7</accession>
<accession>P77905</accession>
<accession>Q10877</accession>
<reference key="1">
    <citation type="journal article" date="2002" name="J. Bacteriol.">
        <title>Whole-genome comparison of Mycobacterium tuberculosis clinical and laboratory strains.</title>
        <authorList>
            <person name="Fleischmann R.D."/>
            <person name="Alland D."/>
            <person name="Eisen J.A."/>
            <person name="Carpenter L."/>
            <person name="White O."/>
            <person name="Peterson J.D."/>
            <person name="DeBoy R.T."/>
            <person name="Dodson R.J."/>
            <person name="Gwinn M.L."/>
            <person name="Haft D.H."/>
            <person name="Hickey E.K."/>
            <person name="Kolonay J.F."/>
            <person name="Nelson W.C."/>
            <person name="Umayam L.A."/>
            <person name="Ermolaeva M.D."/>
            <person name="Salzberg S.L."/>
            <person name="Delcher A."/>
            <person name="Utterback T.R."/>
            <person name="Weidman J.F."/>
            <person name="Khouri H.M."/>
            <person name="Gill J."/>
            <person name="Mikula A."/>
            <person name="Bishai W."/>
            <person name="Jacobs W.R. Jr."/>
            <person name="Venter J.C."/>
            <person name="Fraser C.M."/>
        </authorList>
    </citation>
    <scope>NUCLEOTIDE SEQUENCE [LARGE SCALE GENOMIC DNA]</scope>
    <source>
        <strain>CDC 1551 / Oshkosh</strain>
    </source>
</reference>
<comment type="catalytic activity">
    <reaction>
        <text>ATP + H2O = ADP + phosphate + H(+)</text>
        <dbReference type="Rhea" id="RHEA:13065"/>
        <dbReference type="ChEBI" id="CHEBI:15377"/>
        <dbReference type="ChEBI" id="CHEBI:15378"/>
        <dbReference type="ChEBI" id="CHEBI:30616"/>
        <dbReference type="ChEBI" id="CHEBI:43474"/>
        <dbReference type="ChEBI" id="CHEBI:456216"/>
    </reaction>
</comment>
<comment type="subcellular location">
    <subcellularLocation>
        <location evidence="4">Cell membrane</location>
        <topology evidence="4">Multi-pass membrane protein</topology>
    </subcellularLocation>
</comment>
<comment type="similarity">
    <text evidence="4">Belongs to the cation transport ATPase (P-type) (TC 3.A.3) family. Type IB subfamily.</text>
</comment>
<evidence type="ECO:0000250" key="1"/>
<evidence type="ECO:0000255" key="2"/>
<evidence type="ECO:0000255" key="3">
    <source>
        <dbReference type="PROSITE-ProRule" id="PRU00280"/>
    </source>
</evidence>
<evidence type="ECO:0000305" key="4"/>
<sequence length="752" mass="77483">MAAPVVGDADLQSVRRIRLDVSGMSCAACASRVETKLNKIPGVRASVNFATRVATIDAVGMAADELCGVVEKAGYHAAPHTETTVLDKRTKDPDGAHARRLLRRLLVAAVLFVPLADLSTLFAIVPSARVPGWGYILTALAAPVVTWAAWPFHSVALRNARHRTTSMETLISVGIVAATAWSLSSVFGDQPPREGSGIWRAILNSDSIYLEVAAGVTVFVLAGRYFEARAKSKAGSALRALAELGAKNVAVLLPDGAELVIPASELKKRQRFVTRPGETIAADGVVVDGSAAIDMSAMTGEAKPVRAYPAASVVGGTVVMDGRLVIEATAVGADTQFAAMVRLVEQAQTQKARAQRLADHIAGVFVPVVFVIAGLAGAAWLVSGAGADRAFSVTLGVLVIACPCALGLATPTAMMVASGRGAQLGIFIKGYRALETIRSIDTVVFDKTGTLTVGQLAVSTVTMAGSGTSERDREEVLGLAAAVESASEHAMAAAIVAASPDPGPVNGFVAVAGCGVSGEVGGHHVEVGKPSWITRTTPCHDAALVSARLDGESRGETVVFVSVDGVVRAALTIADTLKDSAAAAVAALRSRGLRTILLTGDNRAAADAVAAQVGIDSAVADMLPEGKVDVIQRLREEGHTVAMVGDGINDGPALVGADLGLAIGRGTDVALGAADIILVRDDLNTVPQALDLARATMRTIRMNMIWAFGYNVAAIPIAAAGLLNPLIAGAAMAFSSFFVVSNSLRLRNFGAQ</sequence>
<proteinExistence type="inferred from homology"/>